<gene>
    <name type="primary">Rasgrf2</name>
    <name type="synonym">Grf2</name>
</gene>
<accession>P70392</accession>
<accession>Q3TYN3</accession>
<accession>Q9QX51</accession>
<keyword id="KW-0106">Calcium</keyword>
<keyword id="KW-0112">Calmodulin-binding</keyword>
<keyword id="KW-1003">Cell membrane</keyword>
<keyword id="KW-0175">Coiled coil</keyword>
<keyword id="KW-0963">Cytoplasm</keyword>
<keyword id="KW-0903">Direct protein sequencing</keyword>
<keyword id="KW-0256">Endoplasmic reticulum</keyword>
<keyword id="KW-0344">Guanine-nucleotide releasing factor</keyword>
<keyword id="KW-0472">Membrane</keyword>
<keyword id="KW-0597">Phosphoprotein</keyword>
<keyword id="KW-1185">Reference proteome</keyword>
<keyword id="KW-0677">Repeat</keyword>
<keyword id="KW-0832">Ubl conjugation</keyword>
<sequence>MQKSVRYNEGHALYLAMLARKEGTKRGFLSKKAAEASRWHEKWFALYQNVLFYFEGEQSGRPAGMYLLEGCSCERTPAPPRTNAGPAGARDALDKQYYFTVLFGHDGQKPLELRCEEEQAGKEWMEAIHQASYADILIEREVLMQKYIHLVQIVETEKIATNQLRHQLEDQDTEIERLKSEIVALNKTKERMRPYHVHQEEEDPDIKKIKKVQSFMRGWLCRRKWKTIVQDYICSPHAESMRKRNQIVFTMVEAETEYVHQLYILVNGFLRPLRMAASSKKPPINHDDVSSIFLNSETIMFLHEIFHQGLKARLANWPTLVLADLFDILLPMLNIYQEFVRNHQYSLQVLANCKQNRDFDKLLKQYEANPACEGRMLETFLTYPMFQIPRYIITLHELLAHTPHEHVERKSLEFAKSKLEELSRVMHDEVSDTENIRKNLAIERMIVEGCDILLDTSQTFIRQGSLIQVPSVERGKLSKVRLGSLSLKKEGERQCFLFTKHFLICTRSSGGKLHLLKTGGVLSLIQCTLIEEPDGSDDDPKGSGHMFGHLDFKIVVEPPDAASFTVVLLAPSRQEKAAWMSDISQCVDNIRCNGLMTIVFEENSKVTVPHMIKSDARLHKDDTDICFSKTLNSCKVPQIRYASVERLLERLTDLRFLSIDFLNTFLHTYRIFTTATVVLAKLSDIYKRPFTSIPVRSLELFFATSQNNREHLVDGKSPRLCRKFSSPPPLAVSRTSSPVRARKLSLTSSLNSRIGALDLTNSSSSSSPTTTTHSPAASPPPHTAVLESAPADKAGDSADMSPCRSPTTPRHLRYRQPGGQVADSAHCSVSPASAFAIATAAAGHGSPPGFNNERTCDKEFIIRRTATNRVLNVLRHWVSKHAQDFELNNELKMNVLNLLEEVLRDPDLLPQERKATANILRALSQDDQDDIHLKLEDIIQMTDCPKAECFETLSAMELAEQITLLDHIVFRSIPYEEFLGQGWMKLDKNERTPYIMKTSQHFNEMSNLVASQIMNYADISSRANAIEKWVAVADICRCLHNYNGVLEITSALNRSAIYRLKKTWAKVSKQTKALMDKLQKTVSSEGRFKNLRETLKNCNPPAVPYLGMYLTDLAFIEEGTPNFTEEGLVNFSKMRMISHIIREIRQFQQTAYRIDQQPKVIQYLLDKALVIDEDSLYELSLKIEPRLPA</sequence>
<proteinExistence type="evidence at protein level"/>
<dbReference type="EMBL" id="U67326">
    <property type="protein sequence ID" value="AAC53058.2"/>
    <property type="molecule type" value="mRNA"/>
</dbReference>
<dbReference type="EMBL" id="AK158472">
    <property type="protein sequence ID" value="BAE34529.1"/>
    <property type="molecule type" value="mRNA"/>
</dbReference>
<dbReference type="EMBL" id="AH008805">
    <property type="protein sequence ID" value="AAF18297.1"/>
    <property type="molecule type" value="Genomic_DNA"/>
</dbReference>
<dbReference type="PIR" id="T42726">
    <property type="entry name" value="T42726"/>
</dbReference>
<dbReference type="RefSeq" id="NP_033053.2">
    <property type="nucleotide sequence ID" value="NM_009027.3"/>
</dbReference>
<dbReference type="SMR" id="P70392"/>
<dbReference type="BioGRID" id="202601">
    <property type="interactions" value="1"/>
</dbReference>
<dbReference type="FunCoup" id="P70392">
    <property type="interactions" value="1393"/>
</dbReference>
<dbReference type="IntAct" id="P70392">
    <property type="interactions" value="4"/>
</dbReference>
<dbReference type="STRING" id="10090.ENSMUSP00000096930"/>
<dbReference type="GlyGen" id="P70392">
    <property type="glycosylation" value="3 sites, 1 O-linked glycan (3 sites)"/>
</dbReference>
<dbReference type="iPTMnet" id="P70392"/>
<dbReference type="PhosphoSitePlus" id="P70392"/>
<dbReference type="SwissPalm" id="P70392"/>
<dbReference type="PaxDb" id="10090-ENSMUSP00000096930"/>
<dbReference type="PeptideAtlas" id="P70392"/>
<dbReference type="ProteomicsDB" id="255191"/>
<dbReference type="Antibodypedia" id="12760">
    <property type="antibodies" value="48 antibodies from 15 providers"/>
</dbReference>
<dbReference type="DNASU" id="19418"/>
<dbReference type="Ensembl" id="ENSMUST00000151408.9">
    <property type="protein sequence ID" value="ENSMUSP00000116892.3"/>
    <property type="gene ID" value="ENSMUSG00000021708.19"/>
</dbReference>
<dbReference type="GeneID" id="19418"/>
<dbReference type="KEGG" id="mmu:19418"/>
<dbReference type="UCSC" id="uc029sco.1">
    <property type="organism name" value="mouse"/>
</dbReference>
<dbReference type="AGR" id="MGI:109137"/>
<dbReference type="CTD" id="5924"/>
<dbReference type="MGI" id="MGI:109137">
    <property type="gene designation" value="Rasgrf2"/>
</dbReference>
<dbReference type="eggNOG" id="KOG3417">
    <property type="taxonomic scope" value="Eukaryota"/>
</dbReference>
<dbReference type="GeneTree" id="ENSGT00940000155679"/>
<dbReference type="InParanoid" id="P70392"/>
<dbReference type="OMA" id="NYWASRR"/>
<dbReference type="OrthoDB" id="10254377at2759"/>
<dbReference type="PhylomeDB" id="P70392"/>
<dbReference type="Reactome" id="R-MMU-193648">
    <property type="pathway name" value="NRAGE signals death through JNK"/>
</dbReference>
<dbReference type="Reactome" id="R-MMU-416482">
    <property type="pathway name" value="G alpha (12/13) signalling events"/>
</dbReference>
<dbReference type="Reactome" id="R-MMU-5673001">
    <property type="pathway name" value="RAF/MAP kinase cascade"/>
</dbReference>
<dbReference type="Reactome" id="R-MMU-8980692">
    <property type="pathway name" value="RHOA GTPase cycle"/>
</dbReference>
<dbReference type="Reactome" id="R-MMU-9013148">
    <property type="pathway name" value="CDC42 GTPase cycle"/>
</dbReference>
<dbReference type="Reactome" id="R-MMU-9013149">
    <property type="pathway name" value="RAC1 GTPase cycle"/>
</dbReference>
<dbReference type="BioGRID-ORCS" id="19418">
    <property type="hits" value="2 hits in 55 CRISPR screens"/>
</dbReference>
<dbReference type="CD-CODE" id="CE726F99">
    <property type="entry name" value="Postsynaptic density"/>
</dbReference>
<dbReference type="PRO" id="PR:P70392"/>
<dbReference type="Proteomes" id="UP000000589">
    <property type="component" value="Chromosome 13"/>
</dbReference>
<dbReference type="RNAct" id="P70392">
    <property type="molecule type" value="protein"/>
</dbReference>
<dbReference type="Bgee" id="ENSMUSG00000021708">
    <property type="expression patterns" value="Expressed in subparaventricular zone and 142 other cell types or tissues"/>
</dbReference>
<dbReference type="ExpressionAtlas" id="P70392">
    <property type="expression patterns" value="baseline and differential"/>
</dbReference>
<dbReference type="GO" id="GO:0005789">
    <property type="term" value="C:endoplasmic reticulum membrane"/>
    <property type="evidence" value="ECO:0007669"/>
    <property type="project" value="UniProtKB-SubCell"/>
</dbReference>
<dbReference type="GO" id="GO:0098978">
    <property type="term" value="C:glutamatergic synapse"/>
    <property type="evidence" value="ECO:0000314"/>
    <property type="project" value="SynGO"/>
</dbReference>
<dbReference type="GO" id="GO:0005886">
    <property type="term" value="C:plasma membrane"/>
    <property type="evidence" value="ECO:0007669"/>
    <property type="project" value="UniProtKB-SubCell"/>
</dbReference>
<dbReference type="GO" id="GO:0098794">
    <property type="term" value="C:postsynapse"/>
    <property type="evidence" value="ECO:0007669"/>
    <property type="project" value="GOC"/>
</dbReference>
<dbReference type="GO" id="GO:0005516">
    <property type="term" value="F:calmodulin binding"/>
    <property type="evidence" value="ECO:0007669"/>
    <property type="project" value="UniProtKB-KW"/>
</dbReference>
<dbReference type="GO" id="GO:0005085">
    <property type="term" value="F:guanyl-nucleotide exchange factor activity"/>
    <property type="evidence" value="ECO:0007669"/>
    <property type="project" value="UniProtKB-KW"/>
</dbReference>
<dbReference type="GO" id="GO:0060291">
    <property type="term" value="P:long-term synaptic potentiation"/>
    <property type="evidence" value="ECO:0000316"/>
    <property type="project" value="MGI"/>
</dbReference>
<dbReference type="GO" id="GO:0099170">
    <property type="term" value="P:postsynaptic modulation of chemical synaptic transmission"/>
    <property type="evidence" value="ECO:0000314"/>
    <property type="project" value="SynGO"/>
</dbReference>
<dbReference type="GO" id="GO:0034976">
    <property type="term" value="P:response to endoplasmic reticulum stress"/>
    <property type="evidence" value="ECO:0007669"/>
    <property type="project" value="Ensembl"/>
</dbReference>
<dbReference type="GO" id="GO:0007264">
    <property type="term" value="P:small GTPase-mediated signal transduction"/>
    <property type="evidence" value="ECO:0007669"/>
    <property type="project" value="InterPro"/>
</dbReference>
<dbReference type="CDD" id="cd13261">
    <property type="entry name" value="PH_RasGRF1_2"/>
    <property type="match status" value="1"/>
</dbReference>
<dbReference type="CDD" id="cd00155">
    <property type="entry name" value="RasGEF"/>
    <property type="match status" value="1"/>
</dbReference>
<dbReference type="CDD" id="cd06224">
    <property type="entry name" value="REM"/>
    <property type="match status" value="1"/>
</dbReference>
<dbReference type="CDD" id="cd00160">
    <property type="entry name" value="RhoGEF"/>
    <property type="match status" value="1"/>
</dbReference>
<dbReference type="FunFam" id="1.20.870.10:FF:000004">
    <property type="entry name" value="Ras-specific guanine nucleotide-releasing factor 1 isoform 2"/>
    <property type="match status" value="1"/>
</dbReference>
<dbReference type="FunFam" id="1.20.900.10:FF:000005">
    <property type="entry name" value="Ras-specific guanine nucleotide-releasing factor 1 isoform 2"/>
    <property type="match status" value="1"/>
</dbReference>
<dbReference type="FunFam" id="1.20.870.10:FF:000006">
    <property type="entry name" value="ras-specific guanine nucleotide-releasing factor 1 isoform X1"/>
    <property type="match status" value="1"/>
</dbReference>
<dbReference type="FunFam" id="2.30.29.30:FF:000117">
    <property type="entry name" value="ras-specific guanine nucleotide-releasing factor 1 isoform X2"/>
    <property type="match status" value="1"/>
</dbReference>
<dbReference type="FunFam" id="2.30.29.30:FF:000176">
    <property type="entry name" value="ras-specific guanine nucleotide-releasing factor 1 isoform X2"/>
    <property type="match status" value="1"/>
</dbReference>
<dbReference type="FunFam" id="1.10.840.10:FF:000004">
    <property type="entry name" value="ras-specific guanine nucleotide-releasing factor 2 isoform X1"/>
    <property type="match status" value="1"/>
</dbReference>
<dbReference type="Gene3D" id="1.20.900.10">
    <property type="entry name" value="Dbl homology (DH) domain"/>
    <property type="match status" value="1"/>
</dbReference>
<dbReference type="Gene3D" id="2.30.29.30">
    <property type="entry name" value="Pleckstrin-homology domain (PH domain)/Phosphotyrosine-binding domain (PTB)"/>
    <property type="match status" value="2"/>
</dbReference>
<dbReference type="Gene3D" id="1.10.840.10">
    <property type="entry name" value="Ras guanine-nucleotide exchange factors catalytic domain"/>
    <property type="match status" value="1"/>
</dbReference>
<dbReference type="Gene3D" id="1.20.870.10">
    <property type="entry name" value="Son of sevenless (SoS) protein Chain: S domain 1"/>
    <property type="match status" value="2"/>
</dbReference>
<dbReference type="InterPro" id="IPR035899">
    <property type="entry name" value="DBL_dom_sf"/>
</dbReference>
<dbReference type="InterPro" id="IPR000219">
    <property type="entry name" value="DH_dom"/>
</dbReference>
<dbReference type="InterPro" id="IPR011993">
    <property type="entry name" value="PH-like_dom_sf"/>
</dbReference>
<dbReference type="InterPro" id="IPR001849">
    <property type="entry name" value="PH_domain"/>
</dbReference>
<dbReference type="InterPro" id="IPR008937">
    <property type="entry name" value="Ras-like_GEF"/>
</dbReference>
<dbReference type="InterPro" id="IPR000651">
    <property type="entry name" value="Ras-like_Gua-exchang_fac_N"/>
</dbReference>
<dbReference type="InterPro" id="IPR019804">
    <property type="entry name" value="Ras_G-nucl-exch_fac_CS"/>
</dbReference>
<dbReference type="InterPro" id="IPR023578">
    <property type="entry name" value="Ras_GEF_dom_sf"/>
</dbReference>
<dbReference type="InterPro" id="IPR001895">
    <property type="entry name" value="RASGEF_cat_dom"/>
</dbReference>
<dbReference type="InterPro" id="IPR036964">
    <property type="entry name" value="RASGEF_cat_dom_sf"/>
</dbReference>
<dbReference type="PANTHER" id="PTHR23113">
    <property type="entry name" value="GUANINE NUCLEOTIDE EXCHANGE FACTOR"/>
    <property type="match status" value="1"/>
</dbReference>
<dbReference type="PANTHER" id="PTHR23113:SF187">
    <property type="entry name" value="RAS-SPECIFIC GUANINE NUCLEOTIDE-RELEASING FACTOR 2"/>
    <property type="match status" value="1"/>
</dbReference>
<dbReference type="Pfam" id="PF00169">
    <property type="entry name" value="PH"/>
    <property type="match status" value="1"/>
</dbReference>
<dbReference type="Pfam" id="PF00617">
    <property type="entry name" value="RasGEF"/>
    <property type="match status" value="1"/>
</dbReference>
<dbReference type="Pfam" id="PF00618">
    <property type="entry name" value="RasGEF_N"/>
    <property type="match status" value="1"/>
</dbReference>
<dbReference type="Pfam" id="PF00621">
    <property type="entry name" value="RhoGEF"/>
    <property type="match status" value="1"/>
</dbReference>
<dbReference type="SMART" id="SM00233">
    <property type="entry name" value="PH"/>
    <property type="match status" value="2"/>
</dbReference>
<dbReference type="SMART" id="SM00147">
    <property type="entry name" value="RasGEF"/>
    <property type="match status" value="1"/>
</dbReference>
<dbReference type="SMART" id="SM00229">
    <property type="entry name" value="RasGEFN"/>
    <property type="match status" value="2"/>
</dbReference>
<dbReference type="SMART" id="SM00325">
    <property type="entry name" value="RhoGEF"/>
    <property type="match status" value="1"/>
</dbReference>
<dbReference type="SUPFAM" id="SSF48065">
    <property type="entry name" value="DBL homology domain (DH-domain)"/>
    <property type="match status" value="1"/>
</dbReference>
<dbReference type="SUPFAM" id="SSF50729">
    <property type="entry name" value="PH domain-like"/>
    <property type="match status" value="2"/>
</dbReference>
<dbReference type="SUPFAM" id="SSF48366">
    <property type="entry name" value="Ras GEF"/>
    <property type="match status" value="1"/>
</dbReference>
<dbReference type="PROSITE" id="PS50010">
    <property type="entry name" value="DH_2"/>
    <property type="match status" value="1"/>
</dbReference>
<dbReference type="PROSITE" id="PS50096">
    <property type="entry name" value="IQ"/>
    <property type="match status" value="1"/>
</dbReference>
<dbReference type="PROSITE" id="PS50003">
    <property type="entry name" value="PH_DOMAIN"/>
    <property type="match status" value="2"/>
</dbReference>
<dbReference type="PROSITE" id="PS00720">
    <property type="entry name" value="RASGEF"/>
    <property type="match status" value="1"/>
</dbReference>
<dbReference type="PROSITE" id="PS50009">
    <property type="entry name" value="RASGEF_CAT"/>
    <property type="match status" value="1"/>
</dbReference>
<dbReference type="PROSITE" id="PS50212">
    <property type="entry name" value="RASGEF_NTER"/>
    <property type="match status" value="1"/>
</dbReference>
<reference key="1">
    <citation type="journal article" date="1997" name="Mol. Cell. Biol.">
        <title>Cloning and characterization of Ras-GRF2, a novel guanine nucleotide exchange factor for Ras.</title>
        <authorList>
            <person name="Fam N.P."/>
            <person name="Fan W.-T."/>
            <person name="Wang Z."/>
            <person name="Zhang L.-J."/>
            <person name="Chen H."/>
            <person name="Moran M.F."/>
        </authorList>
    </citation>
    <scope>NUCLEOTIDE SEQUENCE [MRNA]</scope>
    <scope>FUNCTION</scope>
    <scope>INTERACTION WITH RAS AND CALMODULIN</scope>
    <scope>SUBCELLULAR LOCATION</scope>
    <source>
        <tissue>Brain</tissue>
    </source>
</reference>
<reference key="2">
    <citation type="journal article" date="2005" name="Science">
        <title>The transcriptional landscape of the mammalian genome.</title>
        <authorList>
            <person name="Carninci P."/>
            <person name="Kasukawa T."/>
            <person name="Katayama S."/>
            <person name="Gough J."/>
            <person name="Frith M.C."/>
            <person name="Maeda N."/>
            <person name="Oyama R."/>
            <person name="Ravasi T."/>
            <person name="Lenhard B."/>
            <person name="Wells C."/>
            <person name="Kodzius R."/>
            <person name="Shimokawa K."/>
            <person name="Bajic V.B."/>
            <person name="Brenner S.E."/>
            <person name="Batalov S."/>
            <person name="Forrest A.R."/>
            <person name="Zavolan M."/>
            <person name="Davis M.J."/>
            <person name="Wilming L.G."/>
            <person name="Aidinis V."/>
            <person name="Allen J.E."/>
            <person name="Ambesi-Impiombato A."/>
            <person name="Apweiler R."/>
            <person name="Aturaliya R.N."/>
            <person name="Bailey T.L."/>
            <person name="Bansal M."/>
            <person name="Baxter L."/>
            <person name="Beisel K.W."/>
            <person name="Bersano T."/>
            <person name="Bono H."/>
            <person name="Chalk A.M."/>
            <person name="Chiu K.P."/>
            <person name="Choudhary V."/>
            <person name="Christoffels A."/>
            <person name="Clutterbuck D.R."/>
            <person name="Crowe M.L."/>
            <person name="Dalla E."/>
            <person name="Dalrymple B.P."/>
            <person name="de Bono B."/>
            <person name="Della Gatta G."/>
            <person name="di Bernardo D."/>
            <person name="Down T."/>
            <person name="Engstrom P."/>
            <person name="Fagiolini M."/>
            <person name="Faulkner G."/>
            <person name="Fletcher C.F."/>
            <person name="Fukushima T."/>
            <person name="Furuno M."/>
            <person name="Futaki S."/>
            <person name="Gariboldi M."/>
            <person name="Georgii-Hemming P."/>
            <person name="Gingeras T.R."/>
            <person name="Gojobori T."/>
            <person name="Green R.E."/>
            <person name="Gustincich S."/>
            <person name="Harbers M."/>
            <person name="Hayashi Y."/>
            <person name="Hensch T.K."/>
            <person name="Hirokawa N."/>
            <person name="Hill D."/>
            <person name="Huminiecki L."/>
            <person name="Iacono M."/>
            <person name="Ikeo K."/>
            <person name="Iwama A."/>
            <person name="Ishikawa T."/>
            <person name="Jakt M."/>
            <person name="Kanapin A."/>
            <person name="Katoh M."/>
            <person name="Kawasawa Y."/>
            <person name="Kelso J."/>
            <person name="Kitamura H."/>
            <person name="Kitano H."/>
            <person name="Kollias G."/>
            <person name="Krishnan S.P."/>
            <person name="Kruger A."/>
            <person name="Kummerfeld S.K."/>
            <person name="Kurochkin I.V."/>
            <person name="Lareau L.F."/>
            <person name="Lazarevic D."/>
            <person name="Lipovich L."/>
            <person name="Liu J."/>
            <person name="Liuni S."/>
            <person name="McWilliam S."/>
            <person name="Madan Babu M."/>
            <person name="Madera M."/>
            <person name="Marchionni L."/>
            <person name="Matsuda H."/>
            <person name="Matsuzawa S."/>
            <person name="Miki H."/>
            <person name="Mignone F."/>
            <person name="Miyake S."/>
            <person name="Morris K."/>
            <person name="Mottagui-Tabar S."/>
            <person name="Mulder N."/>
            <person name="Nakano N."/>
            <person name="Nakauchi H."/>
            <person name="Ng P."/>
            <person name="Nilsson R."/>
            <person name="Nishiguchi S."/>
            <person name="Nishikawa S."/>
            <person name="Nori F."/>
            <person name="Ohara O."/>
            <person name="Okazaki Y."/>
            <person name="Orlando V."/>
            <person name="Pang K.C."/>
            <person name="Pavan W.J."/>
            <person name="Pavesi G."/>
            <person name="Pesole G."/>
            <person name="Petrovsky N."/>
            <person name="Piazza S."/>
            <person name="Reed J."/>
            <person name="Reid J.F."/>
            <person name="Ring B.Z."/>
            <person name="Ringwald M."/>
            <person name="Rost B."/>
            <person name="Ruan Y."/>
            <person name="Salzberg S.L."/>
            <person name="Sandelin A."/>
            <person name="Schneider C."/>
            <person name="Schoenbach C."/>
            <person name="Sekiguchi K."/>
            <person name="Semple C.A."/>
            <person name="Seno S."/>
            <person name="Sessa L."/>
            <person name="Sheng Y."/>
            <person name="Shibata Y."/>
            <person name="Shimada H."/>
            <person name="Shimada K."/>
            <person name="Silva D."/>
            <person name="Sinclair B."/>
            <person name="Sperling S."/>
            <person name="Stupka E."/>
            <person name="Sugiura K."/>
            <person name="Sultana R."/>
            <person name="Takenaka Y."/>
            <person name="Taki K."/>
            <person name="Tammoja K."/>
            <person name="Tan S.L."/>
            <person name="Tang S."/>
            <person name="Taylor M.S."/>
            <person name="Tegner J."/>
            <person name="Teichmann S.A."/>
            <person name="Ueda H.R."/>
            <person name="van Nimwegen E."/>
            <person name="Verardo R."/>
            <person name="Wei C.L."/>
            <person name="Yagi K."/>
            <person name="Yamanishi H."/>
            <person name="Zabarovsky E."/>
            <person name="Zhu S."/>
            <person name="Zimmer A."/>
            <person name="Hide W."/>
            <person name="Bult C."/>
            <person name="Grimmond S.M."/>
            <person name="Teasdale R.D."/>
            <person name="Liu E.T."/>
            <person name="Brusic V."/>
            <person name="Quackenbush J."/>
            <person name="Wahlestedt C."/>
            <person name="Mattick J.S."/>
            <person name="Hume D.A."/>
            <person name="Kai C."/>
            <person name="Sasaki D."/>
            <person name="Tomaru Y."/>
            <person name="Fukuda S."/>
            <person name="Kanamori-Katayama M."/>
            <person name="Suzuki M."/>
            <person name="Aoki J."/>
            <person name="Arakawa T."/>
            <person name="Iida J."/>
            <person name="Imamura K."/>
            <person name="Itoh M."/>
            <person name="Kato T."/>
            <person name="Kawaji H."/>
            <person name="Kawagashira N."/>
            <person name="Kawashima T."/>
            <person name="Kojima M."/>
            <person name="Kondo S."/>
            <person name="Konno H."/>
            <person name="Nakano K."/>
            <person name="Ninomiya N."/>
            <person name="Nishio T."/>
            <person name="Okada M."/>
            <person name="Plessy C."/>
            <person name="Shibata K."/>
            <person name="Shiraki T."/>
            <person name="Suzuki S."/>
            <person name="Tagami M."/>
            <person name="Waki K."/>
            <person name="Watahiki A."/>
            <person name="Okamura-Oho Y."/>
            <person name="Suzuki H."/>
            <person name="Kawai J."/>
            <person name="Hayashizaki Y."/>
        </authorList>
    </citation>
    <scope>NUCLEOTIDE SEQUENCE [LARGE SCALE MRNA]</scope>
    <source>
        <strain>C57BL/6J</strain>
        <tissue>Inner ear</tissue>
    </source>
</reference>
<reference key="3">
    <citation type="journal article" date="2001" name="Mol. Cell. Biol.">
        <title>Ras binding triggers ubiquitination of the Ras exchange factor Ras-GRF2.</title>
        <authorList>
            <person name="de Hoog C.L."/>
            <person name="Koehler J.A."/>
            <person name="Goldstein M.D."/>
            <person name="Taylor P."/>
            <person name="Figeys D."/>
            <person name="Moran M.F."/>
        </authorList>
    </citation>
    <scope>PROTEIN SEQUENCE OF 464-474 AND 723-734</scope>
    <scope>PHOSPHORYLATION</scope>
    <scope>UBIQUITINATION</scope>
    <scope>MUTAGENESIS OF ARG-1022 AND ARG-1092</scope>
</reference>
<reference key="4">
    <citation type="journal article" date="2002" name="Mol. Cell. Biol.">
        <title>Targeted disruption of Ras-Grf2 shows its dispensability for mouse growth and development.</title>
        <authorList>
            <person name="Fernandez-Medarde A."/>
            <person name="Esteban L.M."/>
            <person name="Nunez A."/>
            <person name="Porteros A."/>
            <person name="Tessarollo L."/>
            <person name="Santos E."/>
        </authorList>
    </citation>
    <scope>NUCLEOTIDE SEQUENCE [GENOMIC DNA] OF 922-1189</scope>
    <scope>DISRUPTION PHENOTYPE</scope>
    <scope>TISSUE SPECIFICITY</scope>
</reference>
<reference key="5">
    <citation type="journal article" date="1998" name="Curr. Biol.">
        <title>The exchange factor Ras-GRF2 activates Ras-dependent and Rac-dependent mitogen-activated protein kinase pathways.</title>
        <authorList>
            <person name="Fan W.-T."/>
            <person name="Koch C.A."/>
            <person name="de Hoog C.L."/>
            <person name="Fam N.P."/>
            <person name="Moran M.F."/>
        </authorList>
    </citation>
    <scope>FUNCTION</scope>
    <scope>INTERACTION WITH RAS AND RAC1</scope>
</reference>
<reference key="6">
    <citation type="journal article" date="1999" name="Mol. Cell. Biol.">
        <title>Ras-specific exchange factor GRF: oligomerization through its Dbl homology domain and calcium-dependent activation of Raf.</title>
        <authorList>
            <person name="Anborgh P.H."/>
            <person name="Qian X."/>
            <person name="Papageorge A.G."/>
            <person name="Vass W.C."/>
            <person name="DeClue J.E."/>
            <person name="Lowy D.R."/>
        </authorList>
    </citation>
    <scope>INTERACTION WITH RASGRF1</scope>
</reference>
<reference key="7">
    <citation type="journal article" date="2000" name="Mol. Cell. Biol.">
        <title>Calmodulin-independent coordination of Ras and extracellular signal-regulated kinase activation by Ras-GRF2.</title>
        <authorList>
            <person name="de Hoog C.L."/>
            <person name="Fan W.-T."/>
            <person name="Goldstein M.D."/>
            <person name="Moran M.F."/>
            <person name="Koch C.A."/>
        </authorList>
    </citation>
    <scope>FUNCTION</scope>
</reference>
<reference key="8">
    <citation type="journal article" date="2001" name="J. Biol. Chem.">
        <title>Prenylation of target GTPases contributes to signaling specificity of Ras-guanine nucleotide exchange factors.</title>
        <authorList>
            <person name="Gotoh T."/>
            <person name="Tian X."/>
            <person name="Feig L.A."/>
        </authorList>
    </citation>
    <scope>FUNCTION</scope>
</reference>
<reference key="9">
    <citation type="journal article" date="2002" name="Eur. J. Biochem.">
        <title>Dematin interacts with the Ras-guanine nucleotide exchange factor Ras-GRF2 and modulates mitogen-activated protein kinase pathways.</title>
        <authorList>
            <person name="Lutchman M."/>
            <person name="Kim A.C."/>
            <person name="Cheng L."/>
            <person name="Whitehead I.P."/>
            <person name="Oh S.S."/>
            <person name="Hanspal M."/>
            <person name="Boukharov A.A."/>
            <person name="Hanada T."/>
            <person name="Chishti A.H."/>
        </authorList>
    </citation>
    <scope>INTERACTION WITH EPB49</scope>
</reference>
<reference key="10">
    <citation type="journal article" date="2004" name="EMBO J.">
        <title>Developmentally regulated role for Ras-GRFs in coupling NMDA glutamate receptors to Ras, Erk and CREB.</title>
        <authorList>
            <person name="Tian X."/>
            <person name="Gotoh T."/>
            <person name="Tsuji K."/>
            <person name="Lo E.H."/>
            <person name="Huang S."/>
            <person name="Feig L.A."/>
        </authorList>
    </citation>
    <scope>FUNCTION</scope>
    <scope>DISRUPTION PHENOTYPE</scope>
    <scope>DEVELOPMENTAL STAGE</scope>
</reference>
<reference key="11">
    <citation type="journal article" date="2004" name="J. Neurosci.">
        <title>p35/cyclin-dependent kinase 5 phosphorylation of ras guanine nucleotide releasing factor 2 (RasGRF2) mediates Rac-dependent extracellular signal-regulated kinase 1/2 activity, altering RasGRF2 and microtubule-associated protein 1b distribution in neurons.</title>
        <authorList>
            <person name="Kesavapany S."/>
            <person name="Amin N."/>
            <person name="Zheng Y.-L."/>
            <person name="Nijhara R."/>
            <person name="Jaffe H."/>
            <person name="Sihag R."/>
            <person name="Gutkind J.S."/>
            <person name="Takahashi S."/>
            <person name="Kulkarni A."/>
            <person name="Grant P."/>
            <person name="Pant H.C."/>
        </authorList>
    </citation>
    <scope>PHOSPHORYLATION BY CDK5</scope>
</reference>
<reference key="12">
    <citation type="journal article" date="2004" name="Mol. Cell. Biol.">
        <title>Activation of H-Ras in the endoplasmic reticulum by the RasGRF family guanine nucleotide exchange factors.</title>
        <authorList>
            <person name="Arozarena I."/>
            <person name="Matallanas D."/>
            <person name="Berciano M.T."/>
            <person name="Sanz-Moreno V."/>
            <person name="Calvo F."/>
            <person name="Munoz M.T."/>
            <person name="Egea G."/>
            <person name="Lafarga M."/>
            <person name="Crespo P."/>
        </authorList>
    </citation>
    <scope>FUNCTION</scope>
    <scope>SUBCELLULAR LOCATION</scope>
</reference>
<reference key="13">
    <citation type="journal article" date="2006" name="FEBS J.">
        <title>The guanine nucleotide exchange factor RasGRF1 directly binds microtubules via DHPH2-mediated interaction.</title>
        <authorList>
            <person name="Forlani G."/>
            <person name="Baldassa S."/>
            <person name="Lavagni P."/>
            <person name="Sturani E."/>
            <person name="Zippel R."/>
        </authorList>
    </citation>
    <scope>INTERACTION WITH MICROTUBULES</scope>
</reference>
<reference key="14">
    <citation type="journal article" date="2006" name="J. Biol. Chem.">
        <title>Age-dependent participation of Ras-GRF proteins in coupling calcium-permeable AMPA glutamate receptors to Ras/Erk signaling in cortical neurons.</title>
        <authorList>
            <person name="Tian X."/>
            <person name="Feig L.A."/>
        </authorList>
    </citation>
    <scope>FUNCTION</scope>
    <scope>INTERACTION WITH GRIA1</scope>
</reference>
<reference key="15">
    <citation type="journal article" date="2006" name="J. Neurosci.">
        <title>Distinct roles for Ras-guanine nucleotide-releasing factor 1 (Ras-GRF1) and Ras-GRF2 in the induction of long-term potentiation and long-term depression.</title>
        <authorList>
            <person name="Li S."/>
            <person name="Tian X."/>
            <person name="Hartley D.M."/>
            <person name="Feig L.A."/>
        </authorList>
    </citation>
    <scope>FUNCTION</scope>
</reference>
<reference key="16">
    <citation type="journal article" date="2010" name="Cell">
        <title>A tissue-specific atlas of mouse protein phosphorylation and expression.</title>
        <authorList>
            <person name="Huttlin E.L."/>
            <person name="Jedrychowski M.P."/>
            <person name="Elias J.E."/>
            <person name="Goswami T."/>
            <person name="Rad R."/>
            <person name="Beausoleil S.A."/>
            <person name="Villen J."/>
            <person name="Haas W."/>
            <person name="Sowa M.E."/>
            <person name="Gygi S.P."/>
        </authorList>
    </citation>
    <scope>PHOSPHORYLATION [LARGE SCALE ANALYSIS] AT SER-725; SER-726; SER-745; SER-749; SER-801; SER-805 AND SER-924</scope>
    <scope>IDENTIFICATION BY MASS SPECTROMETRY [LARGE SCALE ANALYSIS]</scope>
    <source>
        <tissue>Brain</tissue>
        <tissue>Lung</tissue>
    </source>
</reference>
<evidence type="ECO:0000250" key="1"/>
<evidence type="ECO:0000250" key="2">
    <source>
        <dbReference type="UniProtKB" id="O14827"/>
    </source>
</evidence>
<evidence type="ECO:0000255" key="3"/>
<evidence type="ECO:0000255" key="4">
    <source>
        <dbReference type="PROSITE-ProRule" id="PRU00062"/>
    </source>
</evidence>
<evidence type="ECO:0000255" key="5">
    <source>
        <dbReference type="PROSITE-ProRule" id="PRU00116"/>
    </source>
</evidence>
<evidence type="ECO:0000255" key="6">
    <source>
        <dbReference type="PROSITE-ProRule" id="PRU00135"/>
    </source>
</evidence>
<evidence type="ECO:0000255" key="7">
    <source>
        <dbReference type="PROSITE-ProRule" id="PRU00145"/>
    </source>
</evidence>
<evidence type="ECO:0000255" key="8">
    <source>
        <dbReference type="PROSITE-ProRule" id="PRU00168"/>
    </source>
</evidence>
<evidence type="ECO:0000256" key="9">
    <source>
        <dbReference type="SAM" id="MobiDB-lite"/>
    </source>
</evidence>
<evidence type="ECO:0000269" key="10">
    <source>
    </source>
</evidence>
<evidence type="ECO:0000269" key="11">
    <source>
    </source>
</evidence>
<evidence type="ECO:0000269" key="12">
    <source>
    </source>
</evidence>
<evidence type="ECO:0000269" key="13">
    <source>
    </source>
</evidence>
<evidence type="ECO:0000269" key="14">
    <source>
    </source>
</evidence>
<evidence type="ECO:0000269" key="15">
    <source>
    </source>
</evidence>
<evidence type="ECO:0000269" key="16">
    <source>
    </source>
</evidence>
<evidence type="ECO:0000269" key="17">
    <source>
    </source>
</evidence>
<evidence type="ECO:0000269" key="18">
    <source>
    </source>
</evidence>
<evidence type="ECO:0000269" key="19">
    <source>
    </source>
</evidence>
<evidence type="ECO:0000269" key="20">
    <source>
    </source>
</evidence>
<evidence type="ECO:0000269" key="21">
    <source>
    </source>
</evidence>
<evidence type="ECO:0000269" key="22">
    <source>
    </source>
</evidence>
<evidence type="ECO:0000269" key="23">
    <source>
    </source>
</evidence>
<evidence type="ECO:0000305" key="24"/>
<evidence type="ECO:0007744" key="25">
    <source>
    </source>
</evidence>
<name>RGRF2_MOUSE</name>
<comment type="function">
    <text evidence="11 13 16 17 19 20 22 23">Functions as a calcium-regulated nucleotide exchange factor activating both Ras and RAC1 through the exchange of bound GDP for GTP. Preferentially activates HRAS in vivo compared to RRAS based on their different types of prenylation. Functions in synaptic plasticity by contributing to the induction of long term potentiation.</text>
</comment>
<comment type="subunit">
    <text evidence="10 14 19 21 22 23">Homooligomer and heterooligomer with RASGRF1. Interacts with Ras and RAC1. Interacts in a calcium-dependent manner with calmodulin. Interacts with EPB49 and probably CDK5R1. Interacts with the AMPA receptor through GRIA1. Interacts with microtubules.</text>
</comment>
<comment type="subcellular location">
    <subcellularLocation>
        <location>Cytoplasm</location>
    </subcellularLocation>
    <subcellularLocation>
        <location>Cell membrane</location>
        <topology>Peripheral membrane protein</topology>
    </subcellularLocation>
    <subcellularLocation>
        <location>Endoplasmic reticulum membrane</location>
        <topology>Peripheral membrane protein</topology>
    </subcellularLocation>
    <text evidence="1">Translocates to membranes when activated. Found both at cell periphery and along the axon of neurons (By similarity).</text>
</comment>
<comment type="tissue specificity">
    <text evidence="15">Expressed in brain in the nucleus of the solitary tract. Not observed in the hippocampus (at protein level).</text>
</comment>
<comment type="developmental stage">
    <text evidence="17">Expression increases in the cortex from birth to adulthood.</text>
</comment>
<comment type="domain">
    <text evidence="1">The Ras-GEF domain and the N-terminal Ras-GEF domain form a Ras-binding site and mediate Ras activation.</text>
</comment>
<comment type="domain">
    <text>The IQ domain mediates the calcium-dependent interaction with calmodulin but is dispensable for the Ras-GEF activity.</text>
</comment>
<comment type="domain">
    <text>The DH (DBL-homology) domain mediates interaction with RASGRF1 and probably EPB49 and is required for RAC1 activation.</text>
</comment>
<comment type="PTM">
    <text evidence="12 18">Phosphorylated by CDK5; down-regulates RASGRF2-mediated RAC1 activation.</text>
</comment>
<comment type="PTM">
    <text evidence="12">Ubiquitinated upon interaction with Ras. Ubiquitination leads to degradation through the 26S proteasome.</text>
</comment>
<comment type="disruption phenotype">
    <text evidence="15 17">Mice do not display overt phenotype.</text>
</comment>
<comment type="miscellaneous">
    <text>Preferentially activates HRAS in vivo compared to R-RAS based on their different types of prenylation.</text>
</comment>
<feature type="chain" id="PRO_0000312864" description="Ras-specific guanine nucleotide-releasing factor 2">
    <location>
        <begin position="1"/>
        <end position="1189"/>
    </location>
</feature>
<feature type="domain" description="PH 1" evidence="7">
    <location>
        <begin position="22"/>
        <end position="133"/>
    </location>
</feature>
<feature type="domain" description="IQ" evidence="5">
    <location>
        <begin position="205"/>
        <end position="234"/>
    </location>
</feature>
<feature type="domain" description="DH" evidence="4">
    <location>
        <begin position="243"/>
        <end position="429"/>
    </location>
</feature>
<feature type="domain" description="PH 2" evidence="7">
    <location>
        <begin position="470"/>
        <end position="588"/>
    </location>
</feature>
<feature type="domain" description="N-terminal Ras-GEF" evidence="6">
    <location>
        <begin position="635"/>
        <end position="755"/>
    </location>
</feature>
<feature type="domain" description="Ras-GEF" evidence="8">
    <location>
        <begin position="954"/>
        <end position="1186"/>
    </location>
</feature>
<feature type="region of interest" description="Disordered" evidence="9">
    <location>
        <begin position="713"/>
        <end position="738"/>
    </location>
</feature>
<feature type="region of interest" description="Regulates proteasomal degradation">
    <location>
        <begin position="743"/>
        <end position="751"/>
    </location>
</feature>
<feature type="region of interest" description="Disordered" evidence="9">
    <location>
        <begin position="757"/>
        <end position="817"/>
    </location>
</feature>
<feature type="region of interest" description="Responsible of the affinity for farnesylated versus geranylgeranylated Ras">
    <location>
        <begin position="1051"/>
        <end position="1080"/>
    </location>
</feature>
<feature type="coiled-coil region" evidence="3">
    <location>
        <begin position="158"/>
        <end position="193"/>
    </location>
</feature>
<feature type="compositionally biased region" description="Low complexity" evidence="9">
    <location>
        <begin position="762"/>
        <end position="776"/>
    </location>
</feature>
<feature type="modified residue" description="Phosphoserine" evidence="25">
    <location>
        <position position="725"/>
    </location>
</feature>
<feature type="modified residue" description="Phosphoserine" evidence="25">
    <location>
        <position position="726"/>
    </location>
</feature>
<feature type="modified residue" description="Phosphoserine; by CDK5" evidence="2">
    <location>
        <position position="736"/>
    </location>
</feature>
<feature type="modified residue" description="Phosphoserine" evidence="25">
    <location>
        <position position="745"/>
    </location>
</feature>
<feature type="modified residue" description="Phosphoserine" evidence="25">
    <location>
        <position position="749"/>
    </location>
</feature>
<feature type="modified residue" description="Phosphoserine" evidence="25">
    <location>
        <position position="801"/>
    </location>
</feature>
<feature type="modified residue" description="Phosphoserine" evidence="25">
    <location>
        <position position="805"/>
    </location>
</feature>
<feature type="modified residue" description="Phosphoserine" evidence="25">
    <location>
        <position position="924"/>
    </location>
</feature>
<feature type="mutagenesis site" description="Loss of interaction with Ras. Loss of Ras activation. Loss of ubiquitination." evidence="12">
    <original>R</original>
    <variation>E</variation>
    <location>
        <position position="1022"/>
    </location>
</feature>
<feature type="mutagenesis site" description="Partial loss of interaction with Ras. Partial loss of Ras activation. Partial loss of ubiquitination." evidence="12">
    <original>R</original>
    <variation>E</variation>
    <location>
        <position position="1092"/>
    </location>
</feature>
<feature type="sequence conflict" description="In Ref. 4; AAF18297." evidence="24" ref="4">
    <original>A</original>
    <variation>P</variation>
    <location>
        <position position="1023"/>
    </location>
</feature>
<feature type="sequence conflict" description="In Ref. 4; AAF18297." evidence="24" ref="4">
    <original>A</original>
    <variation>P</variation>
    <location>
        <position position="1056"/>
    </location>
</feature>
<feature type="sequence conflict" description="In Ref. 2; BAE34529." evidence="24" ref="2">
    <original>K</original>
    <variation>R</variation>
    <location>
        <position position="1061"/>
    </location>
</feature>
<feature type="sequence conflict" description="In Ref. 2; BAE34529." evidence="24" ref="2">
    <original>D</original>
    <variation>N</variation>
    <location>
        <position position="1076"/>
    </location>
</feature>
<protein>
    <recommendedName>
        <fullName>Ras-specific guanine nucleotide-releasing factor 2</fullName>
        <shortName>Ras-GRF2</shortName>
    </recommendedName>
    <alternativeName>
        <fullName>Ras guanine nucleotide exchange factor 2</fullName>
    </alternativeName>
</protein>
<organism>
    <name type="scientific">Mus musculus</name>
    <name type="common">Mouse</name>
    <dbReference type="NCBI Taxonomy" id="10090"/>
    <lineage>
        <taxon>Eukaryota</taxon>
        <taxon>Metazoa</taxon>
        <taxon>Chordata</taxon>
        <taxon>Craniata</taxon>
        <taxon>Vertebrata</taxon>
        <taxon>Euteleostomi</taxon>
        <taxon>Mammalia</taxon>
        <taxon>Eutheria</taxon>
        <taxon>Euarchontoglires</taxon>
        <taxon>Glires</taxon>
        <taxon>Rodentia</taxon>
        <taxon>Myomorpha</taxon>
        <taxon>Muroidea</taxon>
        <taxon>Muridae</taxon>
        <taxon>Murinae</taxon>
        <taxon>Mus</taxon>
        <taxon>Mus</taxon>
    </lineage>
</organism>